<dbReference type="EMBL" id="AE005174">
    <property type="protein sequence ID" value="AAG57343.1"/>
    <property type="molecule type" value="Genomic_DNA"/>
</dbReference>
<dbReference type="EMBL" id="BA000007">
    <property type="protein sequence ID" value="BAB36520.1"/>
    <property type="molecule type" value="Genomic_DNA"/>
</dbReference>
<dbReference type="PIR" id="A91016">
    <property type="entry name" value="A91016"/>
</dbReference>
<dbReference type="PIR" id="C85860">
    <property type="entry name" value="C85860"/>
</dbReference>
<dbReference type="RefSeq" id="NP_311124.1">
    <property type="nucleotide sequence ID" value="NC_002695.1"/>
</dbReference>
<dbReference type="RefSeq" id="WP_000686723.1">
    <property type="nucleotide sequence ID" value="NZ_VOAI01000001.1"/>
</dbReference>
<dbReference type="STRING" id="155864.Z3465"/>
<dbReference type="GeneID" id="916803"/>
<dbReference type="GeneID" id="93774970"/>
<dbReference type="KEGG" id="ece:Z3465"/>
<dbReference type="KEGG" id="ecs:ECs_3097"/>
<dbReference type="PATRIC" id="fig|386585.9.peg.3231"/>
<dbReference type="eggNOG" id="COG1145">
    <property type="taxonomic scope" value="Bacteria"/>
</dbReference>
<dbReference type="eggNOG" id="COG1149">
    <property type="taxonomic scope" value="Bacteria"/>
</dbReference>
<dbReference type="HOGENOM" id="CLU_077329_2_1_6"/>
<dbReference type="OMA" id="YQGIWCQ"/>
<dbReference type="Proteomes" id="UP000000558">
    <property type="component" value="Chromosome"/>
</dbReference>
<dbReference type="Proteomes" id="UP000002519">
    <property type="component" value="Chromosome"/>
</dbReference>
<dbReference type="GO" id="GO:0005737">
    <property type="term" value="C:cytoplasm"/>
    <property type="evidence" value="ECO:0007669"/>
    <property type="project" value="UniProtKB-SubCell"/>
</dbReference>
<dbReference type="GO" id="GO:0051539">
    <property type="term" value="F:4 iron, 4 sulfur cluster binding"/>
    <property type="evidence" value="ECO:0007669"/>
    <property type="project" value="UniProtKB-UniRule"/>
</dbReference>
<dbReference type="GO" id="GO:0046872">
    <property type="term" value="F:metal ion binding"/>
    <property type="evidence" value="ECO:0007669"/>
    <property type="project" value="UniProtKB-KW"/>
</dbReference>
<dbReference type="CDD" id="cd10564">
    <property type="entry name" value="NapF_like"/>
    <property type="match status" value="1"/>
</dbReference>
<dbReference type="FunFam" id="3.30.70.20:FF:000024">
    <property type="entry name" value="Ferredoxin-type protein NapF"/>
    <property type="match status" value="1"/>
</dbReference>
<dbReference type="FunFam" id="3.30.70.20:FF:000025">
    <property type="entry name" value="Ferredoxin-type protein NapF"/>
    <property type="match status" value="1"/>
</dbReference>
<dbReference type="Gene3D" id="3.30.70.20">
    <property type="match status" value="2"/>
</dbReference>
<dbReference type="HAMAP" id="MF_02201">
    <property type="entry name" value="NapF"/>
    <property type="match status" value="1"/>
</dbReference>
<dbReference type="InterPro" id="IPR017896">
    <property type="entry name" value="4Fe4S_Fe-S-bd"/>
</dbReference>
<dbReference type="InterPro" id="IPR017900">
    <property type="entry name" value="4Fe4S_Fe_S_CS"/>
</dbReference>
<dbReference type="InterPro" id="IPR050572">
    <property type="entry name" value="Fe-S_Ferredoxin"/>
</dbReference>
<dbReference type="InterPro" id="IPR004496">
    <property type="entry name" value="NapF"/>
</dbReference>
<dbReference type="NCBIfam" id="TIGR00402">
    <property type="entry name" value="napF"/>
    <property type="match status" value="1"/>
</dbReference>
<dbReference type="PANTHER" id="PTHR43687">
    <property type="entry name" value="ADENYLYLSULFATE REDUCTASE, BETA SUBUNIT"/>
    <property type="match status" value="1"/>
</dbReference>
<dbReference type="PANTHER" id="PTHR43687:SF1">
    <property type="entry name" value="FERREDOXIN III"/>
    <property type="match status" value="1"/>
</dbReference>
<dbReference type="Pfam" id="PF12838">
    <property type="entry name" value="Fer4_7"/>
    <property type="match status" value="1"/>
</dbReference>
<dbReference type="Pfam" id="PF13187">
    <property type="entry name" value="Fer4_9"/>
    <property type="match status" value="1"/>
</dbReference>
<dbReference type="SUPFAM" id="SSF54862">
    <property type="entry name" value="4Fe-4S ferredoxins"/>
    <property type="match status" value="1"/>
</dbReference>
<dbReference type="PROSITE" id="PS00198">
    <property type="entry name" value="4FE4S_FER_1"/>
    <property type="match status" value="3"/>
</dbReference>
<dbReference type="PROSITE" id="PS51379">
    <property type="entry name" value="4FE4S_FER_2"/>
    <property type="match status" value="3"/>
</dbReference>
<gene>
    <name evidence="1" type="primary">napF</name>
    <name type="ordered locus">Z3465</name>
    <name type="ordered locus">ECs3097</name>
</gene>
<evidence type="ECO:0000255" key="1">
    <source>
        <dbReference type="HAMAP-Rule" id="MF_02201"/>
    </source>
</evidence>
<evidence type="ECO:0000255" key="2">
    <source>
        <dbReference type="PROSITE-ProRule" id="PRU00711"/>
    </source>
</evidence>
<keyword id="KW-0004">4Fe-4S</keyword>
<keyword id="KW-0963">Cytoplasm</keyword>
<keyword id="KW-0408">Iron</keyword>
<keyword id="KW-0411">Iron-sulfur</keyword>
<keyword id="KW-0479">Metal-binding</keyword>
<keyword id="KW-1185">Reference proteome</keyword>
<keyword id="KW-0677">Repeat</keyword>
<name>NAPF_ECO57</name>
<accession>P0AAL2</accession>
<accession>P33939</accession>
<organism>
    <name type="scientific">Escherichia coli O157:H7</name>
    <dbReference type="NCBI Taxonomy" id="83334"/>
    <lineage>
        <taxon>Bacteria</taxon>
        <taxon>Pseudomonadati</taxon>
        <taxon>Pseudomonadota</taxon>
        <taxon>Gammaproteobacteria</taxon>
        <taxon>Enterobacterales</taxon>
        <taxon>Enterobacteriaceae</taxon>
        <taxon>Escherichia</taxon>
    </lineage>
</organism>
<sequence length="164" mass="18047">MKIDASRRGILTGRWRKASNGIRPPWSGDESHFLTHCTRCDACINACENNILQRGAGGYPSVNFKNNECSFCYACAQACPESLFSPRHTRAWDLQFTIGDACLAYQSVECRRCQDSCEPMAIIFRPTLSGIYQPQLNSQLCNGCGACAASCPVSAITAEYLHAH</sequence>
<protein>
    <recommendedName>
        <fullName evidence="1">Ferredoxin-type protein NapF</fullName>
    </recommendedName>
</protein>
<proteinExistence type="inferred from homology"/>
<feature type="chain" id="PRO_0000159276" description="Ferredoxin-type protein NapF">
    <location>
        <begin position="1"/>
        <end position="164"/>
    </location>
</feature>
<feature type="domain" description="4Fe-4S ferredoxin-type 1" evidence="1">
    <location>
        <begin position="28"/>
        <end position="57"/>
    </location>
</feature>
<feature type="domain" description="4Fe-4S ferredoxin-type 2" evidence="1">
    <location>
        <begin position="58"/>
        <end position="89"/>
    </location>
</feature>
<feature type="domain" description="4Fe-4S ferredoxin-type 3" evidence="1">
    <location>
        <begin position="132"/>
        <end position="161"/>
    </location>
</feature>
<feature type="binding site" evidence="1">
    <location>
        <position position="37"/>
    </location>
    <ligand>
        <name>[4Fe-4S] cluster</name>
        <dbReference type="ChEBI" id="CHEBI:49883"/>
        <label>1</label>
    </ligand>
</feature>
<feature type="binding site" evidence="1">
    <location>
        <position position="40"/>
    </location>
    <ligand>
        <name>[4Fe-4S] cluster</name>
        <dbReference type="ChEBI" id="CHEBI:49883"/>
        <label>1</label>
    </ligand>
</feature>
<feature type="binding site" evidence="1">
    <location>
        <position position="43"/>
    </location>
    <ligand>
        <name>[4Fe-4S] cluster</name>
        <dbReference type="ChEBI" id="CHEBI:49883"/>
        <label>1</label>
    </ligand>
</feature>
<feature type="binding site" evidence="1">
    <location>
        <position position="47"/>
    </location>
    <ligand>
        <name>[4Fe-4S] cluster</name>
        <dbReference type="ChEBI" id="CHEBI:49883"/>
        <label>1</label>
    </ligand>
</feature>
<feature type="binding site" evidence="1">
    <location>
        <position position="69"/>
    </location>
    <ligand>
        <name>[4Fe-4S] cluster</name>
        <dbReference type="ChEBI" id="CHEBI:49883"/>
        <label>2</label>
    </ligand>
</feature>
<feature type="binding site" evidence="1">
    <location>
        <position position="72"/>
    </location>
    <ligand>
        <name>[4Fe-4S] cluster</name>
        <dbReference type="ChEBI" id="CHEBI:49883"/>
        <label>2</label>
    </ligand>
</feature>
<feature type="binding site" evidence="1">
    <location>
        <position position="75"/>
    </location>
    <ligand>
        <name>[4Fe-4S] cluster</name>
        <dbReference type="ChEBI" id="CHEBI:49883"/>
        <label>2</label>
    </ligand>
</feature>
<feature type="binding site" evidence="1">
    <location>
        <position position="79"/>
    </location>
    <ligand>
        <name>[4Fe-4S] cluster</name>
        <dbReference type="ChEBI" id="CHEBI:49883"/>
        <label>2</label>
    </ligand>
</feature>
<feature type="binding site" evidence="1">
    <location>
        <position position="141"/>
    </location>
    <ligand>
        <name>[4Fe-4S] cluster</name>
        <dbReference type="ChEBI" id="CHEBI:49883"/>
        <label>3</label>
    </ligand>
</feature>
<feature type="binding site" evidence="1">
    <location>
        <position position="144"/>
    </location>
    <ligand>
        <name>[4Fe-4S] cluster</name>
        <dbReference type="ChEBI" id="CHEBI:49883"/>
        <label>3</label>
    </ligand>
</feature>
<feature type="binding site" evidence="1">
    <location>
        <position position="147"/>
    </location>
    <ligand>
        <name>[4Fe-4S] cluster</name>
        <dbReference type="ChEBI" id="CHEBI:49883"/>
        <label>3</label>
    </ligand>
</feature>
<feature type="binding site" evidence="1">
    <location>
        <position position="151"/>
    </location>
    <ligand>
        <name>[4Fe-4S] cluster</name>
        <dbReference type="ChEBI" id="CHEBI:49883"/>
        <label>3</label>
    </ligand>
</feature>
<reference key="1">
    <citation type="journal article" date="2001" name="Nature">
        <title>Genome sequence of enterohaemorrhagic Escherichia coli O157:H7.</title>
        <authorList>
            <person name="Perna N.T."/>
            <person name="Plunkett G. III"/>
            <person name="Burland V."/>
            <person name="Mau B."/>
            <person name="Glasner J.D."/>
            <person name="Rose D.J."/>
            <person name="Mayhew G.F."/>
            <person name="Evans P.S."/>
            <person name="Gregor J."/>
            <person name="Kirkpatrick H.A."/>
            <person name="Posfai G."/>
            <person name="Hackett J."/>
            <person name="Klink S."/>
            <person name="Boutin A."/>
            <person name="Shao Y."/>
            <person name="Miller L."/>
            <person name="Grotbeck E.J."/>
            <person name="Davis N.W."/>
            <person name="Lim A."/>
            <person name="Dimalanta E.T."/>
            <person name="Potamousis K."/>
            <person name="Apodaca J."/>
            <person name="Anantharaman T.S."/>
            <person name="Lin J."/>
            <person name="Yen G."/>
            <person name="Schwartz D.C."/>
            <person name="Welch R.A."/>
            <person name="Blattner F.R."/>
        </authorList>
    </citation>
    <scope>NUCLEOTIDE SEQUENCE [LARGE SCALE GENOMIC DNA]</scope>
    <source>
        <strain>O157:H7 / EDL933 / ATCC 700927 / EHEC</strain>
    </source>
</reference>
<reference key="2">
    <citation type="journal article" date="2001" name="DNA Res.">
        <title>Complete genome sequence of enterohemorrhagic Escherichia coli O157:H7 and genomic comparison with a laboratory strain K-12.</title>
        <authorList>
            <person name="Hayashi T."/>
            <person name="Makino K."/>
            <person name="Ohnishi M."/>
            <person name="Kurokawa K."/>
            <person name="Ishii K."/>
            <person name="Yokoyama K."/>
            <person name="Han C.-G."/>
            <person name="Ohtsubo E."/>
            <person name="Nakayama K."/>
            <person name="Murata T."/>
            <person name="Tanaka M."/>
            <person name="Tobe T."/>
            <person name="Iida T."/>
            <person name="Takami H."/>
            <person name="Honda T."/>
            <person name="Sasakawa C."/>
            <person name="Ogasawara N."/>
            <person name="Yasunaga T."/>
            <person name="Kuhara S."/>
            <person name="Shiba T."/>
            <person name="Hattori M."/>
            <person name="Shinagawa H."/>
        </authorList>
    </citation>
    <scope>NUCLEOTIDE SEQUENCE [LARGE SCALE GENOMIC DNA]</scope>
    <source>
        <strain>O157:H7 / Sakai / RIMD 0509952 / EHEC</strain>
    </source>
</reference>
<comment type="function">
    <text evidence="1">Could be involved in the maturation of NapA, the catalytic subunit of the periplasmic nitrate reductase, before its export into the periplasm.</text>
</comment>
<comment type="cofactor">
    <cofactor evidence="1">
        <name>[4Fe-4S] cluster</name>
        <dbReference type="ChEBI" id="CHEBI:49883"/>
    </cofactor>
    <text evidence="2">Binds 3 [4Fe-4S] cluster.</text>
</comment>
<comment type="subunit">
    <text evidence="1">Interacts with the cytoplasmic NapA precursor.</text>
</comment>
<comment type="subcellular location">
    <subcellularLocation>
        <location evidence="1">Cytoplasm</location>
    </subcellularLocation>
</comment>
<comment type="similarity">
    <text evidence="1">Belongs to the NapF family.</text>
</comment>